<proteinExistence type="inferred from homology"/>
<sequence length="201" mass="23410">MIILNYNKTFFLKSISNISDIQIEHGIEIAFIGYSNSGKSSAINALTNQKKLARFSKTPGRTQLINLFQVTSDFRIVDLPGYGYAKAPLLIKIKWQNMIYSYLKNSRSLKGLVLLMDIRYPLKILDQDIISMALNCKIPILLLLTKCDKFTINNQKIQFQKVYEKLDKFLNELHIQLFSSLKKIGIEKLKSKLNFWYEKYR</sequence>
<protein>
    <recommendedName>
        <fullName evidence="1">Probable GTP-binding protein EngB</fullName>
    </recommendedName>
</protein>
<accession>Q8K9C9</accession>
<feature type="chain" id="PRO_0000157740" description="Probable GTP-binding protein EngB">
    <location>
        <begin position="1"/>
        <end position="201"/>
    </location>
</feature>
<feature type="domain" description="EngB-type G" evidence="1">
    <location>
        <begin position="25"/>
        <end position="199"/>
    </location>
</feature>
<feature type="binding site" evidence="1">
    <location>
        <begin position="33"/>
        <end position="40"/>
    </location>
    <ligand>
        <name>GTP</name>
        <dbReference type="ChEBI" id="CHEBI:37565"/>
    </ligand>
</feature>
<feature type="binding site" evidence="1">
    <location>
        <position position="40"/>
    </location>
    <ligand>
        <name>Mg(2+)</name>
        <dbReference type="ChEBI" id="CHEBI:18420"/>
    </ligand>
</feature>
<feature type="binding site" evidence="1">
    <location>
        <begin position="60"/>
        <end position="64"/>
    </location>
    <ligand>
        <name>GTP</name>
        <dbReference type="ChEBI" id="CHEBI:37565"/>
    </ligand>
</feature>
<feature type="binding site" evidence="1">
    <location>
        <position position="62"/>
    </location>
    <ligand>
        <name>Mg(2+)</name>
        <dbReference type="ChEBI" id="CHEBI:18420"/>
    </ligand>
</feature>
<feature type="binding site" evidence="1">
    <location>
        <begin position="78"/>
        <end position="81"/>
    </location>
    <ligand>
        <name>GTP</name>
        <dbReference type="ChEBI" id="CHEBI:37565"/>
    </ligand>
</feature>
<feature type="binding site" evidence="1">
    <location>
        <begin position="145"/>
        <end position="148"/>
    </location>
    <ligand>
        <name>GTP</name>
        <dbReference type="ChEBI" id="CHEBI:37565"/>
    </ligand>
</feature>
<feature type="binding site" evidence="1">
    <location>
        <begin position="178"/>
        <end position="180"/>
    </location>
    <ligand>
        <name>GTP</name>
        <dbReference type="ChEBI" id="CHEBI:37565"/>
    </ligand>
</feature>
<dbReference type="EMBL" id="AE013218">
    <property type="protein sequence ID" value="AAM67962.1"/>
    <property type="molecule type" value="Genomic_DNA"/>
</dbReference>
<dbReference type="RefSeq" id="WP_011053929.1">
    <property type="nucleotide sequence ID" value="NC_004061.1"/>
</dbReference>
<dbReference type="SMR" id="Q8K9C9"/>
<dbReference type="STRING" id="198804.BUsg_417"/>
<dbReference type="GeneID" id="93003889"/>
<dbReference type="KEGG" id="bas:BUsg_417"/>
<dbReference type="eggNOG" id="COG0218">
    <property type="taxonomic scope" value="Bacteria"/>
</dbReference>
<dbReference type="HOGENOM" id="CLU_033732_1_0_6"/>
<dbReference type="Proteomes" id="UP000000416">
    <property type="component" value="Chromosome"/>
</dbReference>
<dbReference type="GO" id="GO:0005829">
    <property type="term" value="C:cytosol"/>
    <property type="evidence" value="ECO:0007669"/>
    <property type="project" value="TreeGrafter"/>
</dbReference>
<dbReference type="GO" id="GO:0005525">
    <property type="term" value="F:GTP binding"/>
    <property type="evidence" value="ECO:0007669"/>
    <property type="project" value="UniProtKB-UniRule"/>
</dbReference>
<dbReference type="GO" id="GO:0046872">
    <property type="term" value="F:metal ion binding"/>
    <property type="evidence" value="ECO:0007669"/>
    <property type="project" value="UniProtKB-KW"/>
</dbReference>
<dbReference type="GO" id="GO:0000917">
    <property type="term" value="P:division septum assembly"/>
    <property type="evidence" value="ECO:0007669"/>
    <property type="project" value="UniProtKB-KW"/>
</dbReference>
<dbReference type="CDD" id="cd01876">
    <property type="entry name" value="YihA_EngB"/>
    <property type="match status" value="1"/>
</dbReference>
<dbReference type="FunFam" id="3.40.50.300:FF:000098">
    <property type="entry name" value="Probable GTP-binding protein EngB"/>
    <property type="match status" value="1"/>
</dbReference>
<dbReference type="Gene3D" id="3.40.50.300">
    <property type="entry name" value="P-loop containing nucleotide triphosphate hydrolases"/>
    <property type="match status" value="1"/>
</dbReference>
<dbReference type="HAMAP" id="MF_00321">
    <property type="entry name" value="GTPase_EngB"/>
    <property type="match status" value="1"/>
</dbReference>
<dbReference type="InterPro" id="IPR030393">
    <property type="entry name" value="G_ENGB_dom"/>
</dbReference>
<dbReference type="InterPro" id="IPR006073">
    <property type="entry name" value="GTP-bd"/>
</dbReference>
<dbReference type="InterPro" id="IPR019987">
    <property type="entry name" value="GTP-bd_ribosome_bio_YsxC"/>
</dbReference>
<dbReference type="InterPro" id="IPR027417">
    <property type="entry name" value="P-loop_NTPase"/>
</dbReference>
<dbReference type="NCBIfam" id="TIGR03598">
    <property type="entry name" value="GTPase_YsxC"/>
    <property type="match status" value="1"/>
</dbReference>
<dbReference type="PANTHER" id="PTHR11649:SF13">
    <property type="entry name" value="ENGB-TYPE G DOMAIN-CONTAINING PROTEIN"/>
    <property type="match status" value="1"/>
</dbReference>
<dbReference type="PANTHER" id="PTHR11649">
    <property type="entry name" value="MSS1/TRME-RELATED GTP-BINDING PROTEIN"/>
    <property type="match status" value="1"/>
</dbReference>
<dbReference type="Pfam" id="PF01926">
    <property type="entry name" value="MMR_HSR1"/>
    <property type="match status" value="1"/>
</dbReference>
<dbReference type="SUPFAM" id="SSF52540">
    <property type="entry name" value="P-loop containing nucleoside triphosphate hydrolases"/>
    <property type="match status" value="1"/>
</dbReference>
<dbReference type="PROSITE" id="PS51706">
    <property type="entry name" value="G_ENGB"/>
    <property type="match status" value="1"/>
</dbReference>
<comment type="function">
    <text evidence="1">Necessary for normal cell division and for the maintenance of normal septation.</text>
</comment>
<comment type="cofactor">
    <cofactor evidence="1">
        <name>Mg(2+)</name>
        <dbReference type="ChEBI" id="CHEBI:18420"/>
    </cofactor>
</comment>
<comment type="similarity">
    <text evidence="1">Belongs to the TRAFAC class TrmE-Era-EngA-EngB-Septin-like GTPase superfamily. EngB GTPase family.</text>
</comment>
<evidence type="ECO:0000255" key="1">
    <source>
        <dbReference type="HAMAP-Rule" id="MF_00321"/>
    </source>
</evidence>
<reference key="1">
    <citation type="journal article" date="2002" name="Science">
        <title>50 million years of genomic stasis in endosymbiotic bacteria.</title>
        <authorList>
            <person name="Tamas I."/>
            <person name="Klasson L."/>
            <person name="Canbaeck B."/>
            <person name="Naeslund A.K."/>
            <person name="Eriksson A.-S."/>
            <person name="Wernegreen J.J."/>
            <person name="Sandstroem J.P."/>
            <person name="Moran N.A."/>
            <person name="Andersson S.G.E."/>
        </authorList>
    </citation>
    <scope>NUCLEOTIDE SEQUENCE [LARGE SCALE GENOMIC DNA]</scope>
    <source>
        <strain>Sg</strain>
    </source>
</reference>
<keyword id="KW-0131">Cell cycle</keyword>
<keyword id="KW-0132">Cell division</keyword>
<keyword id="KW-0342">GTP-binding</keyword>
<keyword id="KW-0460">Magnesium</keyword>
<keyword id="KW-0479">Metal-binding</keyword>
<keyword id="KW-0547">Nucleotide-binding</keyword>
<keyword id="KW-0717">Septation</keyword>
<organism>
    <name type="scientific">Buchnera aphidicola subsp. Schizaphis graminum (strain Sg)</name>
    <dbReference type="NCBI Taxonomy" id="198804"/>
    <lineage>
        <taxon>Bacteria</taxon>
        <taxon>Pseudomonadati</taxon>
        <taxon>Pseudomonadota</taxon>
        <taxon>Gammaproteobacteria</taxon>
        <taxon>Enterobacterales</taxon>
        <taxon>Erwiniaceae</taxon>
        <taxon>Buchnera</taxon>
    </lineage>
</organism>
<gene>
    <name evidence="1" type="primary">engB</name>
    <name type="ordered locus">BUsg_417</name>
</gene>
<name>ENGB_BUCAP</name>